<dbReference type="EMBL" id="CP000947">
    <property type="protein sequence ID" value="ACA32388.1"/>
    <property type="molecule type" value="Genomic_DNA"/>
</dbReference>
<dbReference type="RefSeq" id="WP_012341548.1">
    <property type="nucleotide sequence ID" value="NC_010519.1"/>
</dbReference>
<dbReference type="SMR" id="B0USG1"/>
<dbReference type="STRING" id="228400.HSM_0722"/>
<dbReference type="GeneID" id="31487008"/>
<dbReference type="KEGG" id="hsm:HSM_0722"/>
<dbReference type="HOGENOM" id="CLU_079503_1_0_6"/>
<dbReference type="GO" id="GO:0005886">
    <property type="term" value="C:plasma membrane"/>
    <property type="evidence" value="ECO:0007669"/>
    <property type="project" value="UniProtKB-SubCell"/>
</dbReference>
<dbReference type="GO" id="GO:0020037">
    <property type="term" value="F:heme binding"/>
    <property type="evidence" value="ECO:0007669"/>
    <property type="project" value="InterPro"/>
</dbReference>
<dbReference type="GO" id="GO:0046872">
    <property type="term" value="F:metal ion binding"/>
    <property type="evidence" value="ECO:0007669"/>
    <property type="project" value="UniProtKB-KW"/>
</dbReference>
<dbReference type="GO" id="GO:0017004">
    <property type="term" value="P:cytochrome complex assembly"/>
    <property type="evidence" value="ECO:0007669"/>
    <property type="project" value="UniProtKB-KW"/>
</dbReference>
<dbReference type="FunFam" id="2.40.50.140:FF:000104">
    <property type="entry name" value="Cytochrome c-type biogenesis protein CcmE"/>
    <property type="match status" value="1"/>
</dbReference>
<dbReference type="Gene3D" id="2.40.50.140">
    <property type="entry name" value="Nucleic acid-binding proteins"/>
    <property type="match status" value="1"/>
</dbReference>
<dbReference type="HAMAP" id="MF_01959">
    <property type="entry name" value="CcmE"/>
    <property type="match status" value="1"/>
</dbReference>
<dbReference type="InterPro" id="IPR004329">
    <property type="entry name" value="CcmE"/>
</dbReference>
<dbReference type="InterPro" id="IPR036127">
    <property type="entry name" value="CcmE-like_sf"/>
</dbReference>
<dbReference type="InterPro" id="IPR012340">
    <property type="entry name" value="NA-bd_OB-fold"/>
</dbReference>
<dbReference type="NCBIfam" id="NF009638">
    <property type="entry name" value="PRK13165.1"/>
    <property type="match status" value="1"/>
</dbReference>
<dbReference type="NCBIfam" id="NF009727">
    <property type="entry name" value="PRK13254.1-1"/>
    <property type="match status" value="1"/>
</dbReference>
<dbReference type="NCBIfam" id="NF009729">
    <property type="entry name" value="PRK13254.1-3"/>
    <property type="match status" value="1"/>
</dbReference>
<dbReference type="PANTHER" id="PTHR34128">
    <property type="entry name" value="CYTOCHROME C-TYPE BIOGENESIS PROTEIN CCME HOMOLOG, MITOCHONDRIAL"/>
    <property type="match status" value="1"/>
</dbReference>
<dbReference type="PANTHER" id="PTHR34128:SF2">
    <property type="entry name" value="CYTOCHROME C-TYPE BIOGENESIS PROTEIN CCME HOMOLOG, MITOCHONDRIAL"/>
    <property type="match status" value="1"/>
</dbReference>
<dbReference type="Pfam" id="PF03100">
    <property type="entry name" value="CcmE"/>
    <property type="match status" value="1"/>
</dbReference>
<dbReference type="SUPFAM" id="SSF82093">
    <property type="entry name" value="Heme chaperone CcmE"/>
    <property type="match status" value="1"/>
</dbReference>
<organism>
    <name type="scientific">Histophilus somni (strain 2336)</name>
    <name type="common">Haemophilus somnus</name>
    <dbReference type="NCBI Taxonomy" id="228400"/>
    <lineage>
        <taxon>Bacteria</taxon>
        <taxon>Pseudomonadati</taxon>
        <taxon>Pseudomonadota</taxon>
        <taxon>Gammaproteobacteria</taxon>
        <taxon>Pasteurellales</taxon>
        <taxon>Pasteurellaceae</taxon>
        <taxon>Histophilus</taxon>
    </lineage>
</organism>
<evidence type="ECO:0000255" key="1">
    <source>
        <dbReference type="HAMAP-Rule" id="MF_01959"/>
    </source>
</evidence>
<evidence type="ECO:0000256" key="2">
    <source>
        <dbReference type="SAM" id="MobiDB-lite"/>
    </source>
</evidence>
<gene>
    <name evidence="1" type="primary">ccmE</name>
    <name evidence="1" type="synonym">cycJ</name>
    <name type="ordered locus">HSM_0722</name>
</gene>
<reference key="1">
    <citation type="submission" date="2008-02" db="EMBL/GenBank/DDBJ databases">
        <title>Complete sequence of Haemophilus somnus 2336.</title>
        <authorList>
            <consortium name="US DOE Joint Genome Institute"/>
            <person name="Siddaramappa S."/>
            <person name="Duncan A.J."/>
            <person name="Challacombe J.F."/>
            <person name="Rainey D."/>
            <person name="Gillaspy A.F."/>
            <person name="Carson M."/>
            <person name="Gipson J."/>
            <person name="Gipson M."/>
            <person name="Bruce D."/>
            <person name="Detter J.C."/>
            <person name="Han C.S."/>
            <person name="Land M."/>
            <person name="Tapia R."/>
            <person name="Thompson L.S."/>
            <person name="Orvis J."/>
            <person name="Zaitshik J."/>
            <person name="Barnes G."/>
            <person name="Brettin T.S."/>
            <person name="Dyer D.W."/>
            <person name="Inzana T.J."/>
        </authorList>
    </citation>
    <scope>NUCLEOTIDE SEQUENCE [LARGE SCALE GENOMIC DNA]</scope>
    <source>
        <strain>2336</strain>
    </source>
</reference>
<sequence length="174" mass="19477">MNPRRKSRLSVVLFILLGISVASALVLYALRQNIDLFYTPTEVVNGKNNESHTKPSIGQRIRIGGMVVEGTVERDPKSLKVRFDLNDIGPSVTVIYEGILPDLFREGQGIVAQGVLIEPTVLNATEVLAKHDENYVPPELEAQMQKIHKPMGISDLKNESDRDRQEKQFKEGNQ</sequence>
<accession>B0USG1</accession>
<proteinExistence type="inferred from homology"/>
<comment type="function">
    <text evidence="1">Heme chaperone required for the biogenesis of c-type cytochromes. Transiently binds heme delivered by CcmC and transfers the heme to apo-cytochromes in a process facilitated by CcmF and CcmH.</text>
</comment>
<comment type="subcellular location">
    <subcellularLocation>
        <location evidence="1">Cell inner membrane</location>
        <topology evidence="1">Single-pass type II membrane protein</topology>
        <orientation evidence="1">Periplasmic side</orientation>
    </subcellularLocation>
</comment>
<comment type="similarity">
    <text evidence="1">Belongs to the CcmE/CycJ family.</text>
</comment>
<feature type="chain" id="PRO_1000189026" description="Cytochrome c-type biogenesis protein CcmE">
    <location>
        <begin position="1"/>
        <end position="174"/>
    </location>
</feature>
<feature type="topological domain" description="Cytoplasmic" evidence="1">
    <location>
        <begin position="1"/>
        <end position="8"/>
    </location>
</feature>
<feature type="transmembrane region" description="Helical; Signal-anchor for type II membrane protein" evidence="1">
    <location>
        <begin position="9"/>
        <end position="29"/>
    </location>
</feature>
<feature type="topological domain" description="Periplasmic" evidence="1">
    <location>
        <begin position="30"/>
        <end position="174"/>
    </location>
</feature>
<feature type="region of interest" description="Disordered" evidence="2">
    <location>
        <begin position="149"/>
        <end position="174"/>
    </location>
</feature>
<feature type="compositionally biased region" description="Basic and acidic residues" evidence="2">
    <location>
        <begin position="156"/>
        <end position="174"/>
    </location>
</feature>
<feature type="binding site" description="covalent" evidence="1">
    <location>
        <position position="131"/>
    </location>
    <ligand>
        <name>heme</name>
        <dbReference type="ChEBI" id="CHEBI:30413"/>
    </ligand>
</feature>
<feature type="binding site" description="axial binding residue" evidence="1">
    <location>
        <position position="135"/>
    </location>
    <ligand>
        <name>heme</name>
        <dbReference type="ChEBI" id="CHEBI:30413"/>
    </ligand>
    <ligandPart>
        <name>Fe</name>
        <dbReference type="ChEBI" id="CHEBI:18248"/>
    </ligandPart>
</feature>
<keyword id="KW-0997">Cell inner membrane</keyword>
<keyword id="KW-1003">Cell membrane</keyword>
<keyword id="KW-0201">Cytochrome c-type biogenesis</keyword>
<keyword id="KW-0349">Heme</keyword>
<keyword id="KW-0408">Iron</keyword>
<keyword id="KW-0472">Membrane</keyword>
<keyword id="KW-0479">Metal-binding</keyword>
<keyword id="KW-0735">Signal-anchor</keyword>
<keyword id="KW-0812">Transmembrane</keyword>
<keyword id="KW-1133">Transmembrane helix</keyword>
<protein>
    <recommendedName>
        <fullName evidence="1">Cytochrome c-type biogenesis protein CcmE</fullName>
    </recommendedName>
    <alternativeName>
        <fullName evidence="1">Cytochrome c maturation protein E</fullName>
    </alternativeName>
    <alternativeName>
        <fullName evidence="1">Heme chaperone CcmE</fullName>
    </alternativeName>
</protein>
<name>CCME_HISS2</name>